<gene>
    <name evidence="1" type="primary">cca</name>
    <name type="ordered locus">SH1455</name>
</gene>
<evidence type="ECO:0000255" key="1">
    <source>
        <dbReference type="HAMAP-Rule" id="MF_01263"/>
    </source>
</evidence>
<name>CCA_STAHJ</name>
<feature type="chain" id="PRO_1000054335" description="CCA-adding enzyme">
    <location>
        <begin position="1"/>
        <end position="400"/>
    </location>
</feature>
<feature type="binding site" evidence="1">
    <location>
        <position position="28"/>
    </location>
    <ligand>
        <name>ATP</name>
        <dbReference type="ChEBI" id="CHEBI:30616"/>
    </ligand>
</feature>
<feature type="binding site" evidence="1">
    <location>
        <position position="28"/>
    </location>
    <ligand>
        <name>CTP</name>
        <dbReference type="ChEBI" id="CHEBI:37563"/>
    </ligand>
</feature>
<feature type="binding site" evidence="1">
    <location>
        <position position="31"/>
    </location>
    <ligand>
        <name>ATP</name>
        <dbReference type="ChEBI" id="CHEBI:30616"/>
    </ligand>
</feature>
<feature type="binding site" evidence="1">
    <location>
        <position position="31"/>
    </location>
    <ligand>
        <name>CTP</name>
        <dbReference type="ChEBI" id="CHEBI:37563"/>
    </ligand>
</feature>
<feature type="binding site" evidence="1">
    <location>
        <position position="41"/>
    </location>
    <ligand>
        <name>Mg(2+)</name>
        <dbReference type="ChEBI" id="CHEBI:18420"/>
    </ligand>
</feature>
<feature type="binding site" evidence="1">
    <location>
        <position position="43"/>
    </location>
    <ligand>
        <name>Mg(2+)</name>
        <dbReference type="ChEBI" id="CHEBI:18420"/>
    </ligand>
</feature>
<feature type="binding site" evidence="1">
    <location>
        <position position="112"/>
    </location>
    <ligand>
        <name>ATP</name>
        <dbReference type="ChEBI" id="CHEBI:30616"/>
    </ligand>
</feature>
<feature type="binding site" evidence="1">
    <location>
        <position position="112"/>
    </location>
    <ligand>
        <name>CTP</name>
        <dbReference type="ChEBI" id="CHEBI:37563"/>
    </ligand>
</feature>
<feature type="binding site" evidence="1">
    <location>
        <position position="155"/>
    </location>
    <ligand>
        <name>ATP</name>
        <dbReference type="ChEBI" id="CHEBI:30616"/>
    </ligand>
</feature>
<feature type="binding site" evidence="1">
    <location>
        <position position="155"/>
    </location>
    <ligand>
        <name>CTP</name>
        <dbReference type="ChEBI" id="CHEBI:37563"/>
    </ligand>
</feature>
<feature type="binding site" evidence="1">
    <location>
        <position position="158"/>
    </location>
    <ligand>
        <name>ATP</name>
        <dbReference type="ChEBI" id="CHEBI:30616"/>
    </ligand>
</feature>
<feature type="binding site" evidence="1">
    <location>
        <position position="158"/>
    </location>
    <ligand>
        <name>CTP</name>
        <dbReference type="ChEBI" id="CHEBI:37563"/>
    </ligand>
</feature>
<feature type="binding site" evidence="1">
    <location>
        <position position="161"/>
    </location>
    <ligand>
        <name>ATP</name>
        <dbReference type="ChEBI" id="CHEBI:30616"/>
    </ligand>
</feature>
<feature type="binding site" evidence="1">
    <location>
        <position position="161"/>
    </location>
    <ligand>
        <name>CTP</name>
        <dbReference type="ChEBI" id="CHEBI:37563"/>
    </ligand>
</feature>
<feature type="binding site" evidence="1">
    <location>
        <position position="164"/>
    </location>
    <ligand>
        <name>ATP</name>
        <dbReference type="ChEBI" id="CHEBI:30616"/>
    </ligand>
</feature>
<feature type="binding site" evidence="1">
    <location>
        <position position="164"/>
    </location>
    <ligand>
        <name>CTP</name>
        <dbReference type="ChEBI" id="CHEBI:37563"/>
    </ligand>
</feature>
<accession>Q4L6G1</accession>
<proteinExistence type="inferred from homology"/>
<comment type="function">
    <text evidence="1">Catalyzes the addition and repair of the essential 3'-terminal CCA sequence in tRNAs without using a nucleic acid template. Adds these three nucleotides in the order of C, C, and A to the tRNA nucleotide-73, using CTP and ATP as substrates and producing inorganic pyrophosphate. tRNA 3'-terminal CCA addition is required both for tRNA processing and repair. Also involved in tRNA surveillance by mediating tandem CCA addition to generate a CCACCA at the 3' terminus of unstable tRNAs. While stable tRNAs receive only 3'-terminal CCA, unstable tRNAs are marked with CCACCA and rapidly degraded.</text>
</comment>
<comment type="catalytic activity">
    <reaction evidence="1">
        <text>a tRNA precursor + 2 CTP + ATP = a tRNA with a 3' CCA end + 3 diphosphate</text>
        <dbReference type="Rhea" id="RHEA:14433"/>
        <dbReference type="Rhea" id="RHEA-COMP:10465"/>
        <dbReference type="Rhea" id="RHEA-COMP:10468"/>
        <dbReference type="ChEBI" id="CHEBI:30616"/>
        <dbReference type="ChEBI" id="CHEBI:33019"/>
        <dbReference type="ChEBI" id="CHEBI:37563"/>
        <dbReference type="ChEBI" id="CHEBI:74896"/>
        <dbReference type="ChEBI" id="CHEBI:83071"/>
        <dbReference type="EC" id="2.7.7.72"/>
    </reaction>
</comment>
<comment type="catalytic activity">
    <reaction evidence="1">
        <text>a tRNA with a 3' CCA end + 2 CTP + ATP = a tRNA with a 3' CCACCA end + 3 diphosphate</text>
        <dbReference type="Rhea" id="RHEA:76235"/>
        <dbReference type="Rhea" id="RHEA-COMP:10468"/>
        <dbReference type="Rhea" id="RHEA-COMP:18655"/>
        <dbReference type="ChEBI" id="CHEBI:30616"/>
        <dbReference type="ChEBI" id="CHEBI:33019"/>
        <dbReference type="ChEBI" id="CHEBI:37563"/>
        <dbReference type="ChEBI" id="CHEBI:83071"/>
        <dbReference type="ChEBI" id="CHEBI:195187"/>
    </reaction>
    <physiologicalReaction direction="left-to-right" evidence="1">
        <dbReference type="Rhea" id="RHEA:76236"/>
    </physiologicalReaction>
</comment>
<comment type="cofactor">
    <cofactor evidence="1">
        <name>Mg(2+)</name>
        <dbReference type="ChEBI" id="CHEBI:18420"/>
    </cofactor>
</comment>
<comment type="subunit">
    <text evidence="1">Homodimer.</text>
</comment>
<comment type="miscellaneous">
    <text evidence="1">A single active site specifically recognizes both ATP and CTP and is responsible for their addition.</text>
</comment>
<comment type="similarity">
    <text evidence="1">Belongs to the tRNA nucleotidyltransferase/poly(A) polymerase family. Bacterial CCA-adding enzyme type 3 subfamily.</text>
</comment>
<sequence length="400" mass="46541">MGTELFNQAKPILEKIEQHGFEAYFVGGSVRDYLMNRHIHDIDITTSATPDEIESIFEKTIPIGREHGTINVVYQGTNYEVTTFRAEAEYVDHRRPSEVYFVRDLKEDLQRRDFTINAIAMDKNFNIYDYFEGDVALNQHIIKTVGDAKERFKEDALRILRGLRFQSQLNFTIEGDTFEAMKHQIADVEHLSIERIVVELKKLIKGQNVSQSYLNLIDLNFFNYVPFFRSLDMKQTKVNSPISFELWIAILLTVEQTNTSLSDLKISNNEKTKINQYHKIMIEMPQVSSKEQLKLFVYDYGMNNIIDIIAINSILEDNNIKIASPLIFNLQSIKEIDQHLPIRSRRELNINGGDILRITSKKSGPWLKEVLRQIEIDVLTNKVPNLKDELLKWVKENVKI</sequence>
<dbReference type="EC" id="2.7.7.72" evidence="1"/>
<dbReference type="EMBL" id="AP006716">
    <property type="protein sequence ID" value="BAE04764.1"/>
    <property type="molecule type" value="Genomic_DNA"/>
</dbReference>
<dbReference type="RefSeq" id="WP_011275750.1">
    <property type="nucleotide sequence ID" value="NC_007168.1"/>
</dbReference>
<dbReference type="SMR" id="Q4L6G1"/>
<dbReference type="KEGG" id="sha:SH1455"/>
<dbReference type="eggNOG" id="COG0617">
    <property type="taxonomic scope" value="Bacteria"/>
</dbReference>
<dbReference type="HOGENOM" id="CLU_015961_3_0_9"/>
<dbReference type="OrthoDB" id="9805698at2"/>
<dbReference type="Proteomes" id="UP000000543">
    <property type="component" value="Chromosome"/>
</dbReference>
<dbReference type="GO" id="GO:0005524">
    <property type="term" value="F:ATP binding"/>
    <property type="evidence" value="ECO:0007669"/>
    <property type="project" value="UniProtKB-UniRule"/>
</dbReference>
<dbReference type="GO" id="GO:0004810">
    <property type="term" value="F:CCA tRNA nucleotidyltransferase activity"/>
    <property type="evidence" value="ECO:0007669"/>
    <property type="project" value="UniProtKB-UniRule"/>
</dbReference>
<dbReference type="GO" id="GO:0000287">
    <property type="term" value="F:magnesium ion binding"/>
    <property type="evidence" value="ECO:0007669"/>
    <property type="project" value="UniProtKB-UniRule"/>
</dbReference>
<dbReference type="GO" id="GO:0000049">
    <property type="term" value="F:tRNA binding"/>
    <property type="evidence" value="ECO:0007669"/>
    <property type="project" value="UniProtKB-UniRule"/>
</dbReference>
<dbReference type="GO" id="GO:0042245">
    <property type="term" value="P:RNA repair"/>
    <property type="evidence" value="ECO:0007669"/>
    <property type="project" value="UniProtKB-KW"/>
</dbReference>
<dbReference type="GO" id="GO:0001680">
    <property type="term" value="P:tRNA 3'-terminal CCA addition"/>
    <property type="evidence" value="ECO:0007669"/>
    <property type="project" value="UniProtKB-UniRule"/>
</dbReference>
<dbReference type="CDD" id="cd05398">
    <property type="entry name" value="NT_ClassII-CCAase"/>
    <property type="match status" value="1"/>
</dbReference>
<dbReference type="Gene3D" id="1.10.246.80">
    <property type="match status" value="1"/>
</dbReference>
<dbReference type="Gene3D" id="3.30.460.10">
    <property type="entry name" value="Beta Polymerase, domain 2"/>
    <property type="match status" value="1"/>
</dbReference>
<dbReference type="Gene3D" id="1.10.3090.10">
    <property type="entry name" value="cca-adding enzyme, domain 2"/>
    <property type="match status" value="1"/>
</dbReference>
<dbReference type="HAMAP" id="MF_01263">
    <property type="entry name" value="CCA_bact_type3"/>
    <property type="match status" value="1"/>
</dbReference>
<dbReference type="InterPro" id="IPR050264">
    <property type="entry name" value="Bact_CCA-adding_enz_type3_sf"/>
</dbReference>
<dbReference type="InterPro" id="IPR032810">
    <property type="entry name" value="CCA-adding_enz_C"/>
</dbReference>
<dbReference type="InterPro" id="IPR023068">
    <property type="entry name" value="CCA-adding_enz_firmicutes"/>
</dbReference>
<dbReference type="InterPro" id="IPR043519">
    <property type="entry name" value="NT_sf"/>
</dbReference>
<dbReference type="InterPro" id="IPR002646">
    <property type="entry name" value="PolA_pol_head_dom"/>
</dbReference>
<dbReference type="InterPro" id="IPR032828">
    <property type="entry name" value="PolyA_RNA-bd"/>
</dbReference>
<dbReference type="NCBIfam" id="NF009814">
    <property type="entry name" value="PRK13299.1"/>
    <property type="match status" value="1"/>
</dbReference>
<dbReference type="PANTHER" id="PTHR46173">
    <property type="entry name" value="CCA TRNA NUCLEOTIDYLTRANSFERASE 1, MITOCHONDRIAL"/>
    <property type="match status" value="1"/>
</dbReference>
<dbReference type="PANTHER" id="PTHR46173:SF1">
    <property type="entry name" value="CCA TRNA NUCLEOTIDYLTRANSFERASE 1, MITOCHONDRIAL"/>
    <property type="match status" value="1"/>
</dbReference>
<dbReference type="Pfam" id="PF01743">
    <property type="entry name" value="PolyA_pol"/>
    <property type="match status" value="1"/>
</dbReference>
<dbReference type="Pfam" id="PF12627">
    <property type="entry name" value="PolyA_pol_RNAbd"/>
    <property type="match status" value="1"/>
</dbReference>
<dbReference type="Pfam" id="PF13735">
    <property type="entry name" value="tRNA_NucTran2_2"/>
    <property type="match status" value="1"/>
</dbReference>
<dbReference type="SUPFAM" id="SSF81301">
    <property type="entry name" value="Nucleotidyltransferase"/>
    <property type="match status" value="1"/>
</dbReference>
<dbReference type="SUPFAM" id="SSF81891">
    <property type="entry name" value="Poly A polymerase C-terminal region-like"/>
    <property type="match status" value="1"/>
</dbReference>
<keyword id="KW-0067">ATP-binding</keyword>
<keyword id="KW-0460">Magnesium</keyword>
<keyword id="KW-0479">Metal-binding</keyword>
<keyword id="KW-0547">Nucleotide-binding</keyword>
<keyword id="KW-0548">Nucleotidyltransferase</keyword>
<keyword id="KW-0692">RNA repair</keyword>
<keyword id="KW-0694">RNA-binding</keyword>
<keyword id="KW-0808">Transferase</keyword>
<keyword id="KW-0819">tRNA processing</keyword>
<reference key="1">
    <citation type="journal article" date="2005" name="J. Bacteriol.">
        <title>Whole-genome sequencing of Staphylococcus haemolyticus uncovers the extreme plasticity of its genome and the evolution of human-colonizing staphylococcal species.</title>
        <authorList>
            <person name="Takeuchi F."/>
            <person name="Watanabe S."/>
            <person name="Baba T."/>
            <person name="Yuzawa H."/>
            <person name="Ito T."/>
            <person name="Morimoto Y."/>
            <person name="Kuroda M."/>
            <person name="Cui L."/>
            <person name="Takahashi M."/>
            <person name="Ankai A."/>
            <person name="Baba S."/>
            <person name="Fukui S."/>
            <person name="Lee J.C."/>
            <person name="Hiramatsu K."/>
        </authorList>
    </citation>
    <scope>NUCLEOTIDE SEQUENCE [LARGE SCALE GENOMIC DNA]</scope>
    <source>
        <strain>JCSC1435</strain>
    </source>
</reference>
<organism>
    <name type="scientific">Staphylococcus haemolyticus (strain JCSC1435)</name>
    <dbReference type="NCBI Taxonomy" id="279808"/>
    <lineage>
        <taxon>Bacteria</taxon>
        <taxon>Bacillati</taxon>
        <taxon>Bacillota</taxon>
        <taxon>Bacilli</taxon>
        <taxon>Bacillales</taxon>
        <taxon>Staphylococcaceae</taxon>
        <taxon>Staphylococcus</taxon>
    </lineage>
</organism>
<protein>
    <recommendedName>
        <fullName evidence="1">CCA-adding enzyme</fullName>
        <ecNumber evidence="1">2.7.7.72</ecNumber>
    </recommendedName>
    <alternativeName>
        <fullName evidence="1">CCA tRNA nucleotidyltransferase</fullName>
    </alternativeName>
    <alternativeName>
        <fullName evidence="1">tRNA CCA-pyrophosphorylase</fullName>
    </alternativeName>
    <alternativeName>
        <fullName evidence="1">tRNA adenylyl-/cytidylyl- transferase</fullName>
    </alternativeName>
    <alternativeName>
        <fullName evidence="1">tRNA nucleotidyltransferase</fullName>
    </alternativeName>
    <alternativeName>
        <fullName evidence="1">tRNA-NT</fullName>
    </alternativeName>
</protein>